<proteinExistence type="evidence at transcript level"/>
<sequence>MSLSTFSGGSTTACAACKHQRKKCKKNCILARYFPQDGTNKFLNAHKLFGVSNITKMLKRIEESQRDIAMENLIYHANARALDPVGGVYRTICDLKCKIEFVQTELNLTRQQIDMCRSLAQEQHRQRQNLPYRCNSFESLLQQDGDEYVNVDGLDHQNMQQQQEMQQQQQNPSNYDMFLEMPEQTSKVKLEEEKISDQRKNNLMRQILMSSAII</sequence>
<protein>
    <recommendedName>
        <fullName>LOB domain-containing protein 7</fullName>
    </recommendedName>
    <alternativeName>
        <fullName>ASYMMETRIC LEAVES 2-like protein 31</fullName>
        <shortName>AS2-like protein 31</shortName>
    </alternativeName>
</protein>
<keyword id="KW-1185">Reference proteome</keyword>
<dbReference type="EMBL" id="AB473864">
    <property type="protein sequence ID" value="BAH10575.1"/>
    <property type="molecule type" value="mRNA"/>
</dbReference>
<dbReference type="EMBL" id="AC008017">
    <property type="protein sequence ID" value="AAD55645.1"/>
    <property type="molecule type" value="Genomic_DNA"/>
</dbReference>
<dbReference type="EMBL" id="CP002684">
    <property type="protein sequence ID" value="AEE35399.1"/>
    <property type="molecule type" value="Genomic_DNA"/>
</dbReference>
<dbReference type="PIR" id="B96755">
    <property type="entry name" value="B96755"/>
</dbReference>
<dbReference type="RefSeq" id="NP_177441.1">
    <property type="nucleotide sequence ID" value="NM_105956.5"/>
</dbReference>
<dbReference type="SMR" id="Q9SSM9"/>
<dbReference type="STRING" id="3702.Q9SSM9"/>
<dbReference type="PaxDb" id="3702-AT1G72980.1"/>
<dbReference type="EnsemblPlants" id="AT1G72980.1">
    <property type="protein sequence ID" value="AT1G72980.1"/>
    <property type="gene ID" value="AT1G72980"/>
</dbReference>
<dbReference type="GeneID" id="843629"/>
<dbReference type="Gramene" id="AT1G72980.1">
    <property type="protein sequence ID" value="AT1G72980.1"/>
    <property type="gene ID" value="AT1G72980"/>
</dbReference>
<dbReference type="KEGG" id="ath:AT1G72980"/>
<dbReference type="Araport" id="AT1G72980"/>
<dbReference type="TAIR" id="AT1G72980">
    <property type="gene designation" value="LBD7"/>
</dbReference>
<dbReference type="eggNOG" id="ENOG502RY2U">
    <property type="taxonomic scope" value="Eukaryota"/>
</dbReference>
<dbReference type="HOGENOM" id="CLU_1463271_0_0_1"/>
<dbReference type="InParanoid" id="Q9SSM9"/>
<dbReference type="OMA" id="IYHANAR"/>
<dbReference type="OrthoDB" id="1893065at2759"/>
<dbReference type="PhylomeDB" id="Q9SSM9"/>
<dbReference type="PRO" id="PR:Q9SSM9"/>
<dbReference type="Proteomes" id="UP000006548">
    <property type="component" value="Chromosome 1"/>
</dbReference>
<dbReference type="ExpressionAtlas" id="Q9SSM9">
    <property type="expression patterns" value="baseline and differential"/>
</dbReference>
<dbReference type="InterPro" id="IPR004883">
    <property type="entry name" value="LOB"/>
</dbReference>
<dbReference type="PANTHER" id="PTHR31301">
    <property type="entry name" value="LOB DOMAIN-CONTAINING PROTEIN 4-RELATED"/>
    <property type="match status" value="1"/>
</dbReference>
<dbReference type="PANTHER" id="PTHR31301:SF75">
    <property type="entry name" value="LOB DOMAIN-CONTAINING PROTEIN 7"/>
    <property type="match status" value="1"/>
</dbReference>
<dbReference type="Pfam" id="PF03195">
    <property type="entry name" value="LOB"/>
    <property type="match status" value="1"/>
</dbReference>
<dbReference type="PROSITE" id="PS50891">
    <property type="entry name" value="LOB"/>
    <property type="match status" value="1"/>
</dbReference>
<feature type="chain" id="PRO_0000132258" description="LOB domain-containing protein 7">
    <location>
        <begin position="1"/>
        <end position="214"/>
    </location>
</feature>
<feature type="domain" description="LOB" evidence="1">
    <location>
        <begin position="12"/>
        <end position="113"/>
    </location>
</feature>
<organism>
    <name type="scientific">Arabidopsis thaliana</name>
    <name type="common">Mouse-ear cress</name>
    <dbReference type="NCBI Taxonomy" id="3702"/>
    <lineage>
        <taxon>Eukaryota</taxon>
        <taxon>Viridiplantae</taxon>
        <taxon>Streptophyta</taxon>
        <taxon>Embryophyta</taxon>
        <taxon>Tracheophyta</taxon>
        <taxon>Spermatophyta</taxon>
        <taxon>Magnoliopsida</taxon>
        <taxon>eudicotyledons</taxon>
        <taxon>Gunneridae</taxon>
        <taxon>Pentapetalae</taxon>
        <taxon>rosids</taxon>
        <taxon>malvids</taxon>
        <taxon>Brassicales</taxon>
        <taxon>Brassicaceae</taxon>
        <taxon>Camelineae</taxon>
        <taxon>Arabidopsis</taxon>
    </lineage>
</organism>
<name>LBD7_ARATH</name>
<evidence type="ECO:0000255" key="1">
    <source>
        <dbReference type="PROSITE-ProRule" id="PRU00291"/>
    </source>
</evidence>
<evidence type="ECO:0000305" key="2"/>
<comment type="similarity">
    <text evidence="2">Belongs to the LOB domain-containing protein family.</text>
</comment>
<reference key="1">
    <citation type="journal article" date="2009" name="Plant J.">
        <title>Characterization of genes in the ASYMMETRIC LEAVES2/LATERAL ORGAN BOUNDARIES (AS2/LOB) family in Arabidopsis thaliana, and functional and molecular comparisons between AS2 and other family members.</title>
        <authorList>
            <person name="Matsumura Y."/>
            <person name="Iwakawa H."/>
            <person name="Machida Y."/>
            <person name="Machida C."/>
        </authorList>
    </citation>
    <scope>NUCLEOTIDE SEQUENCE [MRNA]</scope>
    <source>
        <strain>cv. Columbia</strain>
    </source>
</reference>
<reference key="2">
    <citation type="journal article" date="2000" name="Nature">
        <title>Sequence and analysis of chromosome 1 of the plant Arabidopsis thaliana.</title>
        <authorList>
            <person name="Theologis A."/>
            <person name="Ecker J.R."/>
            <person name="Palm C.J."/>
            <person name="Federspiel N.A."/>
            <person name="Kaul S."/>
            <person name="White O."/>
            <person name="Alonso J."/>
            <person name="Altafi H."/>
            <person name="Araujo R."/>
            <person name="Bowman C.L."/>
            <person name="Brooks S.Y."/>
            <person name="Buehler E."/>
            <person name="Chan A."/>
            <person name="Chao Q."/>
            <person name="Chen H."/>
            <person name="Cheuk R.F."/>
            <person name="Chin C.W."/>
            <person name="Chung M.K."/>
            <person name="Conn L."/>
            <person name="Conway A.B."/>
            <person name="Conway A.R."/>
            <person name="Creasy T.H."/>
            <person name="Dewar K."/>
            <person name="Dunn P."/>
            <person name="Etgu P."/>
            <person name="Feldblyum T.V."/>
            <person name="Feng J.-D."/>
            <person name="Fong B."/>
            <person name="Fujii C.Y."/>
            <person name="Gill J.E."/>
            <person name="Goldsmith A.D."/>
            <person name="Haas B."/>
            <person name="Hansen N.F."/>
            <person name="Hughes B."/>
            <person name="Huizar L."/>
            <person name="Hunter J.L."/>
            <person name="Jenkins J."/>
            <person name="Johnson-Hopson C."/>
            <person name="Khan S."/>
            <person name="Khaykin E."/>
            <person name="Kim C.J."/>
            <person name="Koo H.L."/>
            <person name="Kremenetskaia I."/>
            <person name="Kurtz D.B."/>
            <person name="Kwan A."/>
            <person name="Lam B."/>
            <person name="Langin-Hooper S."/>
            <person name="Lee A."/>
            <person name="Lee J.M."/>
            <person name="Lenz C.A."/>
            <person name="Li J.H."/>
            <person name="Li Y.-P."/>
            <person name="Lin X."/>
            <person name="Liu S.X."/>
            <person name="Liu Z.A."/>
            <person name="Luros J.S."/>
            <person name="Maiti R."/>
            <person name="Marziali A."/>
            <person name="Militscher J."/>
            <person name="Miranda M."/>
            <person name="Nguyen M."/>
            <person name="Nierman W.C."/>
            <person name="Osborne B.I."/>
            <person name="Pai G."/>
            <person name="Peterson J."/>
            <person name="Pham P.K."/>
            <person name="Rizzo M."/>
            <person name="Rooney T."/>
            <person name="Rowley D."/>
            <person name="Sakano H."/>
            <person name="Salzberg S.L."/>
            <person name="Schwartz J.R."/>
            <person name="Shinn P."/>
            <person name="Southwick A.M."/>
            <person name="Sun H."/>
            <person name="Tallon L.J."/>
            <person name="Tambunga G."/>
            <person name="Toriumi M.J."/>
            <person name="Town C.D."/>
            <person name="Utterback T."/>
            <person name="Van Aken S."/>
            <person name="Vaysberg M."/>
            <person name="Vysotskaia V.S."/>
            <person name="Walker M."/>
            <person name="Wu D."/>
            <person name="Yu G."/>
            <person name="Fraser C.M."/>
            <person name="Venter J.C."/>
            <person name="Davis R.W."/>
        </authorList>
    </citation>
    <scope>NUCLEOTIDE SEQUENCE [LARGE SCALE GENOMIC DNA]</scope>
    <source>
        <strain>cv. Columbia</strain>
    </source>
</reference>
<reference key="3">
    <citation type="journal article" date="2017" name="Plant J.">
        <title>Araport11: a complete reannotation of the Arabidopsis thaliana reference genome.</title>
        <authorList>
            <person name="Cheng C.Y."/>
            <person name="Krishnakumar V."/>
            <person name="Chan A.P."/>
            <person name="Thibaud-Nissen F."/>
            <person name="Schobel S."/>
            <person name="Town C.D."/>
        </authorList>
    </citation>
    <scope>GENOME REANNOTATION</scope>
    <source>
        <strain>cv. Columbia</strain>
    </source>
</reference>
<reference key="4">
    <citation type="journal article" date="2002" name="Plant Physiol.">
        <title>The LATERAL ORGAN BOUNDARIES gene defines a novel, plant-specific gene family.</title>
        <authorList>
            <person name="Shuai B."/>
            <person name="Reynaga-Pena C.G."/>
            <person name="Springer P.S."/>
        </authorList>
    </citation>
    <scope>GENE FAMILY</scope>
    <scope>NOMENCLATURE</scope>
</reference>
<reference key="5">
    <citation type="journal article" date="2002" name="Plant Cell Physiol.">
        <title>The ASYMMETRIC LEAVES2 gene of Arabidopsis thaliana, required for formation of a symmetric flat leaf lamina, encodes a member of a novel family of proteins characterized by cysteine repeats and a leucine zipper.</title>
        <authorList>
            <person name="Iwakawa H."/>
            <person name="Ueno Y."/>
            <person name="Semiarti E."/>
            <person name="Onouchi H."/>
            <person name="Kojima S."/>
            <person name="Tsukaya H."/>
            <person name="Hasebe M."/>
            <person name="Soma T."/>
            <person name="Ikezaki M."/>
            <person name="Machida C."/>
            <person name="Machida Y."/>
        </authorList>
    </citation>
    <scope>GENE FAMILY</scope>
    <scope>NOMENCLATURE</scope>
</reference>
<gene>
    <name type="primary">LBD7</name>
    <name type="synonym">ASL31</name>
    <name type="ordered locus">At1g72980</name>
    <name type="ORF">F3N23.18</name>
</gene>
<accession>Q9SSM9</accession>
<accession>B7XG85</accession>